<sequence>MSLSLWQQCLARLQDELPATEFSMWIRPLQAELSDNTLALYAPNRFVLDWVRDKYLNNINGLLNDFCGTDAPLLRFEVGSKPITQVISQTVTASVSSAPAAPAARTAAPSRPSWDNAAAQPELSYRSNVNPKHTFDNFVEGKSNQLARAAARQVADNPGGAYNPLFLYGGTGLGKTHLLHAVGNGIMARKANAKVVYMHSERFVQDMVKALQNNAIEEFKRYYRSVDALLIDDIQFFANKERSQEEFFHTFNALLEGNQQIILTSDRYPKEINGVEDRLKSRFGWGLTVAIEPPELETRVAILMKKADENDIRLPGEVAFFIAKRLRSNVRELEGALNRVIANANFTGRAITIDFVREALRDLLALQEKLVTIDNIQKTVAEYYKIKVADLLSKRRSRSVARPRQMAMALAKELTNHSLPEIGDAFGGRDHTTVLHACRKIEQLREESHDIKEDFSNLIRTLSS</sequence>
<protein>
    <recommendedName>
        <fullName evidence="1">Chromosomal replication initiator protein DnaA</fullName>
    </recommendedName>
</protein>
<proteinExistence type="inferred from homology"/>
<reference key="1">
    <citation type="journal article" date="1987" name="J. Bacteriol.">
        <title>Comparison of dnaA nucleotide sequences of Escherichia coli, Salmonella typhimurium, and Serratia marcescens.</title>
        <authorList>
            <person name="Skovgaard O."/>
            <person name="Hansen F.G."/>
        </authorList>
    </citation>
    <scope>NUCLEOTIDE SEQUENCE [GENOMIC DNA]</scope>
</reference>
<organism>
    <name type="scientific">Serratia marcescens</name>
    <dbReference type="NCBI Taxonomy" id="615"/>
    <lineage>
        <taxon>Bacteria</taxon>
        <taxon>Pseudomonadati</taxon>
        <taxon>Pseudomonadota</taxon>
        <taxon>Gammaproteobacteria</taxon>
        <taxon>Enterobacterales</taxon>
        <taxon>Yersiniaceae</taxon>
        <taxon>Serratia</taxon>
    </lineage>
</organism>
<dbReference type="EMBL" id="M17353">
    <property type="protein sequence ID" value="AAA02924.1"/>
    <property type="molecule type" value="Genomic_DNA"/>
</dbReference>
<dbReference type="SMR" id="P29440"/>
<dbReference type="STRING" id="273526.SMDB11_4151"/>
<dbReference type="PATRIC" id="fig|615.108.peg.4759"/>
<dbReference type="OrthoDB" id="9807019at2"/>
<dbReference type="GO" id="GO:0005737">
    <property type="term" value="C:cytoplasm"/>
    <property type="evidence" value="ECO:0007669"/>
    <property type="project" value="UniProtKB-SubCell"/>
</dbReference>
<dbReference type="GO" id="GO:0005886">
    <property type="term" value="C:plasma membrane"/>
    <property type="evidence" value="ECO:0007669"/>
    <property type="project" value="TreeGrafter"/>
</dbReference>
<dbReference type="GO" id="GO:0005524">
    <property type="term" value="F:ATP binding"/>
    <property type="evidence" value="ECO:0007669"/>
    <property type="project" value="UniProtKB-UniRule"/>
</dbReference>
<dbReference type="GO" id="GO:0016887">
    <property type="term" value="F:ATP hydrolysis activity"/>
    <property type="evidence" value="ECO:0007669"/>
    <property type="project" value="InterPro"/>
</dbReference>
<dbReference type="GO" id="GO:0003688">
    <property type="term" value="F:DNA replication origin binding"/>
    <property type="evidence" value="ECO:0007669"/>
    <property type="project" value="UniProtKB-UniRule"/>
</dbReference>
<dbReference type="GO" id="GO:0008289">
    <property type="term" value="F:lipid binding"/>
    <property type="evidence" value="ECO:0007669"/>
    <property type="project" value="UniProtKB-KW"/>
</dbReference>
<dbReference type="GO" id="GO:0006270">
    <property type="term" value="P:DNA replication initiation"/>
    <property type="evidence" value="ECO:0007669"/>
    <property type="project" value="UniProtKB-UniRule"/>
</dbReference>
<dbReference type="GO" id="GO:0006275">
    <property type="term" value="P:regulation of DNA replication"/>
    <property type="evidence" value="ECO:0007669"/>
    <property type="project" value="UniProtKB-UniRule"/>
</dbReference>
<dbReference type="CDD" id="cd00009">
    <property type="entry name" value="AAA"/>
    <property type="match status" value="1"/>
</dbReference>
<dbReference type="CDD" id="cd06571">
    <property type="entry name" value="Bac_DnaA_C"/>
    <property type="match status" value="1"/>
</dbReference>
<dbReference type="FunFam" id="1.10.1750.10:FF:000001">
    <property type="entry name" value="Chromosomal replication initiator protein DnaA"/>
    <property type="match status" value="1"/>
</dbReference>
<dbReference type="FunFam" id="1.10.8.60:FF:000003">
    <property type="entry name" value="Chromosomal replication initiator protein DnaA"/>
    <property type="match status" value="1"/>
</dbReference>
<dbReference type="FunFam" id="3.30.300.180:FF:000001">
    <property type="entry name" value="Chromosomal replication initiator protein DnaA"/>
    <property type="match status" value="1"/>
</dbReference>
<dbReference type="FunFam" id="3.40.50.300:FF:000103">
    <property type="entry name" value="Chromosomal replication initiator protein DnaA"/>
    <property type="match status" value="1"/>
</dbReference>
<dbReference type="Gene3D" id="1.10.1750.10">
    <property type="match status" value="1"/>
</dbReference>
<dbReference type="Gene3D" id="1.10.8.60">
    <property type="match status" value="1"/>
</dbReference>
<dbReference type="Gene3D" id="3.30.300.180">
    <property type="match status" value="1"/>
</dbReference>
<dbReference type="Gene3D" id="3.40.50.300">
    <property type="entry name" value="P-loop containing nucleotide triphosphate hydrolases"/>
    <property type="match status" value="1"/>
</dbReference>
<dbReference type="HAMAP" id="MF_00377">
    <property type="entry name" value="DnaA_bact"/>
    <property type="match status" value="1"/>
</dbReference>
<dbReference type="InterPro" id="IPR003593">
    <property type="entry name" value="AAA+_ATPase"/>
</dbReference>
<dbReference type="InterPro" id="IPR001957">
    <property type="entry name" value="Chromosome_initiator_DnaA"/>
</dbReference>
<dbReference type="InterPro" id="IPR020591">
    <property type="entry name" value="Chromosome_initiator_DnaA-like"/>
</dbReference>
<dbReference type="InterPro" id="IPR018312">
    <property type="entry name" value="Chromosome_initiator_DnaA_CS"/>
</dbReference>
<dbReference type="InterPro" id="IPR013159">
    <property type="entry name" value="DnaA_C"/>
</dbReference>
<dbReference type="InterPro" id="IPR013317">
    <property type="entry name" value="DnaA_dom"/>
</dbReference>
<dbReference type="InterPro" id="IPR024633">
    <property type="entry name" value="DnaA_N_dom"/>
</dbReference>
<dbReference type="InterPro" id="IPR038454">
    <property type="entry name" value="DnaA_N_sf"/>
</dbReference>
<dbReference type="InterPro" id="IPR027417">
    <property type="entry name" value="P-loop_NTPase"/>
</dbReference>
<dbReference type="InterPro" id="IPR010921">
    <property type="entry name" value="Trp_repressor/repl_initiator"/>
</dbReference>
<dbReference type="NCBIfam" id="TIGR00362">
    <property type="entry name" value="DnaA"/>
    <property type="match status" value="1"/>
</dbReference>
<dbReference type="PANTHER" id="PTHR30050">
    <property type="entry name" value="CHROMOSOMAL REPLICATION INITIATOR PROTEIN DNAA"/>
    <property type="match status" value="1"/>
</dbReference>
<dbReference type="PANTHER" id="PTHR30050:SF2">
    <property type="entry name" value="CHROMOSOMAL REPLICATION INITIATOR PROTEIN DNAA"/>
    <property type="match status" value="1"/>
</dbReference>
<dbReference type="Pfam" id="PF00308">
    <property type="entry name" value="Bac_DnaA"/>
    <property type="match status" value="1"/>
</dbReference>
<dbReference type="Pfam" id="PF08299">
    <property type="entry name" value="Bac_DnaA_C"/>
    <property type="match status" value="1"/>
</dbReference>
<dbReference type="Pfam" id="PF11638">
    <property type="entry name" value="DnaA_N"/>
    <property type="match status" value="1"/>
</dbReference>
<dbReference type="PRINTS" id="PR00051">
    <property type="entry name" value="DNAA"/>
</dbReference>
<dbReference type="SMART" id="SM00382">
    <property type="entry name" value="AAA"/>
    <property type="match status" value="1"/>
</dbReference>
<dbReference type="SMART" id="SM00760">
    <property type="entry name" value="Bac_DnaA_C"/>
    <property type="match status" value="1"/>
</dbReference>
<dbReference type="SUPFAM" id="SSF52540">
    <property type="entry name" value="P-loop containing nucleoside triphosphate hydrolases"/>
    <property type="match status" value="1"/>
</dbReference>
<dbReference type="SUPFAM" id="SSF48295">
    <property type="entry name" value="TrpR-like"/>
    <property type="match status" value="1"/>
</dbReference>
<dbReference type="PROSITE" id="PS01008">
    <property type="entry name" value="DNAA"/>
    <property type="match status" value="1"/>
</dbReference>
<keyword id="KW-0067">ATP-binding</keyword>
<keyword id="KW-0963">Cytoplasm</keyword>
<keyword id="KW-0235">DNA replication</keyword>
<keyword id="KW-0238">DNA-binding</keyword>
<keyword id="KW-0446">Lipid-binding</keyword>
<keyword id="KW-0547">Nucleotide-binding</keyword>
<feature type="chain" id="PRO_0000114253" description="Chromosomal replication initiator protein DnaA">
    <location>
        <begin position="1"/>
        <end position="464"/>
    </location>
</feature>
<feature type="region of interest" description="Domain I, interacts with DnaA modulators" evidence="1">
    <location>
        <begin position="1"/>
        <end position="82"/>
    </location>
</feature>
<feature type="region of interest" description="Domain II" evidence="1">
    <location>
        <begin position="82"/>
        <end position="127"/>
    </location>
</feature>
<feature type="region of interest" description="Disordered" evidence="2">
    <location>
        <begin position="98"/>
        <end position="117"/>
    </location>
</feature>
<feature type="region of interest" description="Domain III, AAA+ region" evidence="1">
    <location>
        <begin position="128"/>
        <end position="344"/>
    </location>
</feature>
<feature type="region of interest" description="Domain IV, binds dsDNA" evidence="1">
    <location>
        <begin position="345"/>
        <end position="464"/>
    </location>
</feature>
<feature type="compositionally biased region" description="Low complexity" evidence="2">
    <location>
        <begin position="98"/>
        <end position="113"/>
    </location>
</feature>
<feature type="binding site" evidence="1">
    <location>
        <position position="172"/>
    </location>
    <ligand>
        <name>ATP</name>
        <dbReference type="ChEBI" id="CHEBI:30616"/>
    </ligand>
</feature>
<feature type="binding site" evidence="1">
    <location>
        <position position="174"/>
    </location>
    <ligand>
        <name>ATP</name>
        <dbReference type="ChEBI" id="CHEBI:30616"/>
    </ligand>
</feature>
<feature type="binding site" evidence="1">
    <location>
        <position position="175"/>
    </location>
    <ligand>
        <name>ATP</name>
        <dbReference type="ChEBI" id="CHEBI:30616"/>
    </ligand>
</feature>
<feature type="binding site" evidence="1">
    <location>
        <position position="176"/>
    </location>
    <ligand>
        <name>ATP</name>
        <dbReference type="ChEBI" id="CHEBI:30616"/>
    </ligand>
</feature>
<name>DNAA_SERMA</name>
<accession>P29440</accession>
<comment type="function">
    <text>Plays an important role in the initiation and regulation of chromosomal replication. Binds to the origin of replication; it binds specifically double-stranded DNA at a 9 bp consensus (dnaA box): 5'-TTATC[CA]A[CA]A-3'. DnaA binds to ATP and to acidic phospholipids. DnaA can inhibit its own gene expression as well as that of other genes.</text>
</comment>
<comment type="function">
    <text evidence="1">Plays an essential role in the initiation and regulation of chromosomal replication. ATP-DnaA binds to the origin of replication (oriC) to initiate formation of the DNA replication initiation complex once per cell cycle. Binds the DnaA box (a 9 base pair repeat at the origin) and separates the double-stranded (ds)DNA. Forms a right-handed helical filament on oriC DNA; dsDNA binds to the exterior of the filament while single-stranded (ss)DNA is stabiized in the filament's interior. The ATP-DnaA-oriC complex binds and stabilizes one strand of the AT-rich DNA unwinding element (DUE), permitting loading of DNA polymerase. After initiation quickly degrades to an ADP-DnaA complex that is not apt for DNA replication. Binds acidic phospholipids.</text>
</comment>
<comment type="subunit">
    <text evidence="1">Oligomerizes as a right-handed, spiral filament on DNA at oriC.</text>
</comment>
<comment type="subcellular location">
    <subcellularLocation>
        <location evidence="1">Cytoplasm</location>
    </subcellularLocation>
</comment>
<comment type="domain">
    <text evidence="1">Domain I is involved in oligomerization and binding regulators, domain II is flexibile and of varying length in different bacteria, domain III forms the AAA+ region, while domain IV binds dsDNA.</text>
</comment>
<comment type="similarity">
    <text evidence="1">Belongs to the DnaA family.</text>
</comment>
<gene>
    <name evidence="1" type="primary">dnaA</name>
</gene>
<evidence type="ECO:0000255" key="1">
    <source>
        <dbReference type="HAMAP-Rule" id="MF_00377"/>
    </source>
</evidence>
<evidence type="ECO:0000256" key="2">
    <source>
        <dbReference type="SAM" id="MobiDB-lite"/>
    </source>
</evidence>